<accession>Q7KV23</accession>
<protein>
    <recommendedName>
        <fullName>Stellate protein CG33247</fullName>
    </recommendedName>
</protein>
<feature type="chain" id="PRO_0000068267" description="Stellate protein CG33247">
    <location>
        <begin position="1"/>
        <end position="172"/>
    </location>
</feature>
<organism>
    <name type="scientific">Drosophila melanogaster</name>
    <name type="common">Fruit fly</name>
    <dbReference type="NCBI Taxonomy" id="7227"/>
    <lineage>
        <taxon>Eukaryota</taxon>
        <taxon>Metazoa</taxon>
        <taxon>Ecdysozoa</taxon>
        <taxon>Arthropoda</taxon>
        <taxon>Hexapoda</taxon>
        <taxon>Insecta</taxon>
        <taxon>Pterygota</taxon>
        <taxon>Neoptera</taxon>
        <taxon>Endopterygota</taxon>
        <taxon>Diptera</taxon>
        <taxon>Brachycera</taxon>
        <taxon>Muscomorpha</taxon>
        <taxon>Ephydroidea</taxon>
        <taxon>Drosophilidae</taxon>
        <taxon>Drosophila</taxon>
        <taxon>Sophophora</taxon>
    </lineage>
</organism>
<name>STEL7_DROME</name>
<keyword id="KW-1185">Reference proteome</keyword>
<sequence length="172" mass="19509">MSSSQNNNSSWIDWFLGIKGNQFLCRVPTDYVQDTFNQMGLEYFSEILDVILKPVIDSSSGLLYGDEKKWYGMIHARYIRAERGLIAMHRKYMRGDFGSCPNISCDRQNTLPVGLSAVWGKSTVKIHCPRCKSNFHPKSDTQLDGAMFGPSFPDIFFSLLPNLTSPLDDPRT</sequence>
<dbReference type="EMBL" id="AE014298">
    <property type="protein sequence ID" value="AAS65327.2"/>
    <property type="molecule type" value="Genomic_DNA"/>
</dbReference>
<dbReference type="RefSeq" id="NP_996421.2">
    <property type="nucleotide sequence ID" value="NM_206698.2"/>
</dbReference>
<dbReference type="SMR" id="Q7KV23"/>
<dbReference type="FunCoup" id="Q7KV23">
    <property type="interactions" value="168"/>
</dbReference>
<dbReference type="STRING" id="7227.FBpp0289373"/>
<dbReference type="PaxDb" id="7227-FBpp0289373"/>
<dbReference type="EnsemblMetazoa" id="FBtr0300096">
    <property type="protein sequence ID" value="FBpp0289373"/>
    <property type="gene ID" value="FBgn0053247"/>
</dbReference>
<dbReference type="GeneID" id="2768904"/>
<dbReference type="KEGG" id="dme:Dmel_CG33247"/>
<dbReference type="UCSC" id="CG33247-RB">
    <property type="organism name" value="d. melanogaster"/>
</dbReference>
<dbReference type="AGR" id="FB:FBgn0003523"/>
<dbReference type="AGR" id="FB:FBgn0053247"/>
<dbReference type="CTD" id="2768904"/>
<dbReference type="FlyBase" id="FBgn0053247">
    <property type="gene designation" value="Ste:CG33247"/>
</dbReference>
<dbReference type="VEuPathDB" id="VectorBase:FBgn0053247"/>
<dbReference type="eggNOG" id="KOG3092">
    <property type="taxonomic scope" value="Eukaryota"/>
</dbReference>
<dbReference type="GeneTree" id="ENSGT00390000003781"/>
<dbReference type="HOGENOM" id="CLU_034027_3_3_1"/>
<dbReference type="InParanoid" id="Q7KV23"/>
<dbReference type="OMA" id="GYIMLER"/>
<dbReference type="OrthoDB" id="3971593at2759"/>
<dbReference type="PhylomeDB" id="Q7KV23"/>
<dbReference type="BioGRID-ORCS" id="2768904">
    <property type="hits" value="0 hits in 1 CRISPR screen"/>
</dbReference>
<dbReference type="GenomeRNAi" id="2768904"/>
<dbReference type="PRO" id="PR:Q7KV23"/>
<dbReference type="Proteomes" id="UP000000803">
    <property type="component" value="Chromosome X"/>
</dbReference>
<dbReference type="GO" id="GO:0005737">
    <property type="term" value="C:cytoplasm"/>
    <property type="evidence" value="ECO:0000314"/>
    <property type="project" value="FlyBase"/>
</dbReference>
<dbReference type="GO" id="GO:0005634">
    <property type="term" value="C:nucleus"/>
    <property type="evidence" value="ECO:0000314"/>
    <property type="project" value="FlyBase"/>
</dbReference>
<dbReference type="GO" id="GO:0005956">
    <property type="term" value="C:protein kinase CK2 complex"/>
    <property type="evidence" value="ECO:0000314"/>
    <property type="project" value="FlyBase"/>
</dbReference>
<dbReference type="GO" id="GO:0019887">
    <property type="term" value="F:protein kinase regulator activity"/>
    <property type="evidence" value="ECO:0000315"/>
    <property type="project" value="FlyBase"/>
</dbReference>
<dbReference type="FunFam" id="1.10.1820.10:FF:000005">
    <property type="entry name" value="Casein kinase II subunit beta"/>
    <property type="match status" value="1"/>
</dbReference>
<dbReference type="FunFam" id="2.20.25.20:FF:000001">
    <property type="entry name" value="Casein kinase II subunit beta"/>
    <property type="match status" value="1"/>
</dbReference>
<dbReference type="Gene3D" id="2.20.25.20">
    <property type="match status" value="1"/>
</dbReference>
<dbReference type="Gene3D" id="1.10.1820.10">
    <property type="entry name" value="protein kinase ck2 holoenzyme, chain C, domain 1"/>
    <property type="match status" value="1"/>
</dbReference>
<dbReference type="InterPro" id="IPR016149">
    <property type="entry name" value="Casein_kin_II_reg-sub_N"/>
</dbReference>
<dbReference type="InterPro" id="IPR035991">
    <property type="entry name" value="Casein_kinase_II_beta-like"/>
</dbReference>
<dbReference type="InterPro" id="IPR000704">
    <property type="entry name" value="Casein_kinase_II_reg-sub"/>
</dbReference>
<dbReference type="PANTHER" id="PTHR11740">
    <property type="entry name" value="CASEIN KINASE II SUBUNIT BETA"/>
    <property type="match status" value="1"/>
</dbReference>
<dbReference type="PANTHER" id="PTHR11740:SF0">
    <property type="entry name" value="CASEIN KINASE II SUBUNIT BETA"/>
    <property type="match status" value="1"/>
</dbReference>
<dbReference type="Pfam" id="PF01214">
    <property type="entry name" value="CK_II_beta"/>
    <property type="match status" value="1"/>
</dbReference>
<dbReference type="PRINTS" id="PR00472">
    <property type="entry name" value="CASNKINASEII"/>
</dbReference>
<dbReference type="SMART" id="SM01085">
    <property type="entry name" value="CK_II_beta"/>
    <property type="match status" value="1"/>
</dbReference>
<dbReference type="SUPFAM" id="SSF57798">
    <property type="entry name" value="Casein kinase II beta subunit"/>
    <property type="match status" value="1"/>
</dbReference>
<dbReference type="PROSITE" id="PS01101">
    <property type="entry name" value="CK2_BETA"/>
    <property type="match status" value="1"/>
</dbReference>
<reference key="1">
    <citation type="journal article" date="2000" name="Science">
        <title>The genome sequence of Drosophila melanogaster.</title>
        <authorList>
            <person name="Adams M.D."/>
            <person name="Celniker S.E."/>
            <person name="Holt R.A."/>
            <person name="Evans C.A."/>
            <person name="Gocayne J.D."/>
            <person name="Amanatides P.G."/>
            <person name="Scherer S.E."/>
            <person name="Li P.W."/>
            <person name="Hoskins R.A."/>
            <person name="Galle R.F."/>
            <person name="George R.A."/>
            <person name="Lewis S.E."/>
            <person name="Richards S."/>
            <person name="Ashburner M."/>
            <person name="Henderson S.N."/>
            <person name="Sutton G.G."/>
            <person name="Wortman J.R."/>
            <person name="Yandell M.D."/>
            <person name="Zhang Q."/>
            <person name="Chen L.X."/>
            <person name="Brandon R.C."/>
            <person name="Rogers Y.-H.C."/>
            <person name="Blazej R.G."/>
            <person name="Champe M."/>
            <person name="Pfeiffer B.D."/>
            <person name="Wan K.H."/>
            <person name="Doyle C."/>
            <person name="Baxter E.G."/>
            <person name="Helt G."/>
            <person name="Nelson C.R."/>
            <person name="Miklos G.L.G."/>
            <person name="Abril J.F."/>
            <person name="Agbayani A."/>
            <person name="An H.-J."/>
            <person name="Andrews-Pfannkoch C."/>
            <person name="Baldwin D."/>
            <person name="Ballew R.M."/>
            <person name="Basu A."/>
            <person name="Baxendale J."/>
            <person name="Bayraktaroglu L."/>
            <person name="Beasley E.M."/>
            <person name="Beeson K.Y."/>
            <person name="Benos P.V."/>
            <person name="Berman B.P."/>
            <person name="Bhandari D."/>
            <person name="Bolshakov S."/>
            <person name="Borkova D."/>
            <person name="Botchan M.R."/>
            <person name="Bouck J."/>
            <person name="Brokstein P."/>
            <person name="Brottier P."/>
            <person name="Burtis K.C."/>
            <person name="Busam D.A."/>
            <person name="Butler H."/>
            <person name="Cadieu E."/>
            <person name="Center A."/>
            <person name="Chandra I."/>
            <person name="Cherry J.M."/>
            <person name="Cawley S."/>
            <person name="Dahlke C."/>
            <person name="Davenport L.B."/>
            <person name="Davies P."/>
            <person name="de Pablos B."/>
            <person name="Delcher A."/>
            <person name="Deng Z."/>
            <person name="Mays A.D."/>
            <person name="Dew I."/>
            <person name="Dietz S.M."/>
            <person name="Dodson K."/>
            <person name="Doup L.E."/>
            <person name="Downes M."/>
            <person name="Dugan-Rocha S."/>
            <person name="Dunkov B.C."/>
            <person name="Dunn P."/>
            <person name="Durbin K.J."/>
            <person name="Evangelista C.C."/>
            <person name="Ferraz C."/>
            <person name="Ferriera S."/>
            <person name="Fleischmann W."/>
            <person name="Fosler C."/>
            <person name="Gabrielian A.E."/>
            <person name="Garg N.S."/>
            <person name="Gelbart W.M."/>
            <person name="Glasser K."/>
            <person name="Glodek A."/>
            <person name="Gong F."/>
            <person name="Gorrell J.H."/>
            <person name="Gu Z."/>
            <person name="Guan P."/>
            <person name="Harris M."/>
            <person name="Harris N.L."/>
            <person name="Harvey D.A."/>
            <person name="Heiman T.J."/>
            <person name="Hernandez J.R."/>
            <person name="Houck J."/>
            <person name="Hostin D."/>
            <person name="Houston K.A."/>
            <person name="Howland T.J."/>
            <person name="Wei M.-H."/>
            <person name="Ibegwam C."/>
            <person name="Jalali M."/>
            <person name="Kalush F."/>
            <person name="Karpen G.H."/>
            <person name="Ke Z."/>
            <person name="Kennison J.A."/>
            <person name="Ketchum K.A."/>
            <person name="Kimmel B.E."/>
            <person name="Kodira C.D."/>
            <person name="Kraft C.L."/>
            <person name="Kravitz S."/>
            <person name="Kulp D."/>
            <person name="Lai Z."/>
            <person name="Lasko P."/>
            <person name="Lei Y."/>
            <person name="Levitsky A.A."/>
            <person name="Li J.H."/>
            <person name="Li Z."/>
            <person name="Liang Y."/>
            <person name="Lin X."/>
            <person name="Liu X."/>
            <person name="Mattei B."/>
            <person name="McIntosh T.C."/>
            <person name="McLeod M.P."/>
            <person name="McPherson D."/>
            <person name="Merkulov G."/>
            <person name="Milshina N.V."/>
            <person name="Mobarry C."/>
            <person name="Morris J."/>
            <person name="Moshrefi A."/>
            <person name="Mount S.M."/>
            <person name="Moy M."/>
            <person name="Murphy B."/>
            <person name="Murphy L."/>
            <person name="Muzny D.M."/>
            <person name="Nelson D.L."/>
            <person name="Nelson D.R."/>
            <person name="Nelson K.A."/>
            <person name="Nixon K."/>
            <person name="Nusskern D.R."/>
            <person name="Pacleb J.M."/>
            <person name="Palazzolo M."/>
            <person name="Pittman G.S."/>
            <person name="Pan S."/>
            <person name="Pollard J."/>
            <person name="Puri V."/>
            <person name="Reese M.G."/>
            <person name="Reinert K."/>
            <person name="Remington K."/>
            <person name="Saunders R.D.C."/>
            <person name="Scheeler F."/>
            <person name="Shen H."/>
            <person name="Shue B.C."/>
            <person name="Siden-Kiamos I."/>
            <person name="Simpson M."/>
            <person name="Skupski M.P."/>
            <person name="Smith T.J."/>
            <person name="Spier E."/>
            <person name="Spradling A.C."/>
            <person name="Stapleton M."/>
            <person name="Strong R."/>
            <person name="Sun E."/>
            <person name="Svirskas R."/>
            <person name="Tector C."/>
            <person name="Turner R."/>
            <person name="Venter E."/>
            <person name="Wang A.H."/>
            <person name="Wang X."/>
            <person name="Wang Z.-Y."/>
            <person name="Wassarman D.A."/>
            <person name="Weinstock G.M."/>
            <person name="Weissenbach J."/>
            <person name="Williams S.M."/>
            <person name="Woodage T."/>
            <person name="Worley K.C."/>
            <person name="Wu D."/>
            <person name="Yang S."/>
            <person name="Yao Q.A."/>
            <person name="Ye J."/>
            <person name="Yeh R.-F."/>
            <person name="Zaveri J.S."/>
            <person name="Zhan M."/>
            <person name="Zhang G."/>
            <person name="Zhao Q."/>
            <person name="Zheng L."/>
            <person name="Zheng X.H."/>
            <person name="Zhong F.N."/>
            <person name="Zhong W."/>
            <person name="Zhou X."/>
            <person name="Zhu S.C."/>
            <person name="Zhu X."/>
            <person name="Smith H.O."/>
            <person name="Gibbs R.A."/>
            <person name="Myers E.W."/>
            <person name="Rubin G.M."/>
            <person name="Venter J.C."/>
        </authorList>
    </citation>
    <scope>NUCLEOTIDE SEQUENCE [LARGE SCALE GENOMIC DNA]</scope>
    <source>
        <strain>Berkeley</strain>
    </source>
</reference>
<reference key="2">
    <citation type="journal article" date="2002" name="Genome Biol.">
        <title>Annotation of the Drosophila melanogaster euchromatic genome: a systematic review.</title>
        <authorList>
            <person name="Misra S."/>
            <person name="Crosby M.A."/>
            <person name="Mungall C.J."/>
            <person name="Matthews B.B."/>
            <person name="Campbell K.S."/>
            <person name="Hradecky P."/>
            <person name="Huang Y."/>
            <person name="Kaminker J.S."/>
            <person name="Millburn G.H."/>
            <person name="Prochnik S.E."/>
            <person name="Smith C.D."/>
            <person name="Tupy J.L."/>
            <person name="Whitfield E.J."/>
            <person name="Bayraktaroglu L."/>
            <person name="Berman B.P."/>
            <person name="Bettencourt B.R."/>
            <person name="Celniker S.E."/>
            <person name="de Grey A.D.N.J."/>
            <person name="Drysdale R.A."/>
            <person name="Harris N.L."/>
            <person name="Richter J."/>
            <person name="Russo S."/>
            <person name="Schroeder A.J."/>
            <person name="Shu S.Q."/>
            <person name="Stapleton M."/>
            <person name="Yamada C."/>
            <person name="Ashburner M."/>
            <person name="Gelbart W.M."/>
            <person name="Rubin G.M."/>
            <person name="Lewis S.E."/>
        </authorList>
    </citation>
    <scope>GENOME REANNOTATION</scope>
    <source>
        <strain>Berkeley</strain>
    </source>
</reference>
<reference key="3">
    <citation type="journal article" date="1995" name="Proc. Natl. Acad. Sci. U.S.A.">
        <title>The Ste locus, a component of the parasitic cry-Ste system of Drosophila melanogaster, encodes a protein that forms crystals in primary spermatocytes and mimics properties of the beta subunit of casein kinase 2.</title>
        <authorList>
            <person name="Bozzetti M.P."/>
            <person name="Massari S."/>
            <person name="Finelli P."/>
            <person name="Meggio F."/>
            <person name="Pinna L.A."/>
            <person name="Boldyreff B."/>
            <person name="Issinger O.G."/>
            <person name="Palumbo G."/>
            <person name="Ciriaco C."/>
            <person name="Bonaccorsi S."/>
            <person name="Pimpinelli S."/>
        </authorList>
    </citation>
    <scope>TISSUE SPECIFICITY</scope>
    <scope>INTERACTION WITH CKII-ALPHA</scope>
</reference>
<reference key="4">
    <citation type="journal article" date="2001" name="Chromosoma">
        <title>A role of the Drosophila homeless gene in repression of Stellate in male meiosis.</title>
        <authorList>
            <person name="Stapleton W."/>
            <person name="Das S."/>
            <person name="McKee B.D."/>
        </authorList>
    </citation>
    <scope>INDUCTION</scope>
</reference>
<reference key="5">
    <citation type="journal article" date="2001" name="Curr. Biol.">
        <title>Double-stranded RNA-mediated silencing of genomic tandem repeats and transposable elements in the D. melanogaster germline.</title>
        <authorList>
            <person name="Aravin A.A."/>
            <person name="Naumova N.M."/>
            <person name="Tulin A.V."/>
            <person name="Vagin V.V."/>
            <person name="Rozovsky Y.M."/>
            <person name="Gvozdev V.A."/>
        </authorList>
    </citation>
    <scope>INDUCTION</scope>
</reference>
<gene>
    <name type="primary">Ste:CG33247</name>
    <name type="ORF">CG33247</name>
</gene>
<proteinExistence type="evidence at protein level"/>
<comment type="function">
    <text>Unknown. In males lacking the Y chromosome, its strong overexpression leads to the appearance of proteinaceous star-shaped crystals in the primary spermatocytes causing meiotic drive, possibly by interfering with normal casein kinase 2 activity.</text>
</comment>
<comment type="subunit">
    <text evidence="3">Interacts in vitro with the casein kinase 2 alpha subunit (CkII-alpha). The relevance of such interaction is however unclear in vivo.</text>
</comment>
<comment type="tissue specificity">
    <text evidence="3">Probably not expressed in wild-type flies. In males lacking the Y chromosome, it is testis-specific and constitutes the main component of star-shaped crystals.</text>
</comment>
<comment type="induction">
    <text evidence="1 2">In wild-type flies, it is strongly down-regulated by double-stranded RNA (dsRNA) interference mediated by Su(Ste) transcripts. In males lacking the Y chromosome, the absence of Su(Ste) locus, relieves such down-regulation, explaining why it is strongly expressed.</text>
</comment>
<comment type="miscellaneous">
    <text>There are multiple copies of the stellate gene in fruit fly, encoding proteins that are extremely similar, which makes their individual characterization difficult. Thus, most experiments probably do not discriminate between the different members.</text>
</comment>
<comment type="similarity">
    <text evidence="4">Belongs to the casein kinase 2 subunit beta family.</text>
</comment>
<evidence type="ECO:0000269" key="1">
    <source>
    </source>
</evidence>
<evidence type="ECO:0000269" key="2">
    <source>
    </source>
</evidence>
<evidence type="ECO:0000269" key="3">
    <source>
    </source>
</evidence>
<evidence type="ECO:0000305" key="4"/>